<reference key="1">
    <citation type="journal article" date="2009" name="Genome Biol.">
        <title>Genomic and genetic analyses of diversity and plant interactions of Pseudomonas fluorescens.</title>
        <authorList>
            <person name="Silby M.W."/>
            <person name="Cerdeno-Tarraga A.M."/>
            <person name="Vernikos G.S."/>
            <person name="Giddens S.R."/>
            <person name="Jackson R.W."/>
            <person name="Preston G.M."/>
            <person name="Zhang X.-X."/>
            <person name="Moon C.D."/>
            <person name="Gehrig S.M."/>
            <person name="Godfrey S.A.C."/>
            <person name="Knight C.G."/>
            <person name="Malone J.G."/>
            <person name="Robinson Z."/>
            <person name="Spiers A.J."/>
            <person name="Harris S."/>
            <person name="Challis G.L."/>
            <person name="Yaxley A.M."/>
            <person name="Harris D."/>
            <person name="Seeger K."/>
            <person name="Murphy L."/>
            <person name="Rutter S."/>
            <person name="Squares R."/>
            <person name="Quail M.A."/>
            <person name="Saunders E."/>
            <person name="Mavromatis K."/>
            <person name="Brettin T.S."/>
            <person name="Bentley S.D."/>
            <person name="Hothersall J."/>
            <person name="Stephens E."/>
            <person name="Thomas C.M."/>
            <person name="Parkhill J."/>
            <person name="Levy S.B."/>
            <person name="Rainey P.B."/>
            <person name="Thomson N.R."/>
        </authorList>
    </citation>
    <scope>NUCLEOTIDE SEQUENCE [LARGE SCALE GENOMIC DNA]</scope>
    <source>
        <strain>Pf0-1</strain>
    </source>
</reference>
<protein>
    <recommendedName>
        <fullName evidence="1">Urease accessory protein UreE</fullName>
    </recommendedName>
</protein>
<accession>Q3KIU9</accession>
<sequence length="166" mass="18758">MLVIHRRIDPQPVWAAELHLTFEARSKSRLRCFSAEGEDVGLFLERGQPPLYDGECLQAEDGRIVRVCARPEQLLHVTCANAFELTRAAYHLGNRHVALQVGDGWLRLLDDYVLKAMLEQLGAQVESIEAPFQPEHGAYGGGHHHSRHGDEDFNYAPKLHQFGVRL</sequence>
<organism>
    <name type="scientific">Pseudomonas fluorescens (strain Pf0-1)</name>
    <dbReference type="NCBI Taxonomy" id="205922"/>
    <lineage>
        <taxon>Bacteria</taxon>
        <taxon>Pseudomonadati</taxon>
        <taxon>Pseudomonadota</taxon>
        <taxon>Gammaproteobacteria</taxon>
        <taxon>Pseudomonadales</taxon>
        <taxon>Pseudomonadaceae</taxon>
        <taxon>Pseudomonas</taxon>
    </lineage>
</organism>
<comment type="function">
    <text evidence="1">Involved in urease metallocenter assembly. Binds nickel. Probably functions as a nickel donor during metallocenter assembly.</text>
</comment>
<comment type="subcellular location">
    <subcellularLocation>
        <location evidence="1">Cytoplasm</location>
    </subcellularLocation>
</comment>
<comment type="similarity">
    <text evidence="1">Belongs to the UreE family.</text>
</comment>
<proteinExistence type="inferred from homology"/>
<name>UREE_PSEPF</name>
<gene>
    <name evidence="1" type="primary">ureE</name>
    <name type="ordered locus">Pfl01_0563</name>
</gene>
<keyword id="KW-0143">Chaperone</keyword>
<keyword id="KW-0963">Cytoplasm</keyword>
<keyword id="KW-0533">Nickel</keyword>
<keyword id="KW-0996">Nickel insertion</keyword>
<evidence type="ECO:0000255" key="1">
    <source>
        <dbReference type="HAMAP-Rule" id="MF_00822"/>
    </source>
</evidence>
<dbReference type="EMBL" id="CP000094">
    <property type="protein sequence ID" value="ABA72307.1"/>
    <property type="molecule type" value="Genomic_DNA"/>
</dbReference>
<dbReference type="RefSeq" id="WP_011332214.1">
    <property type="nucleotide sequence ID" value="NC_007492.2"/>
</dbReference>
<dbReference type="SMR" id="Q3KIU9"/>
<dbReference type="KEGG" id="pfo:Pfl01_0563"/>
<dbReference type="eggNOG" id="COG2371">
    <property type="taxonomic scope" value="Bacteria"/>
</dbReference>
<dbReference type="HOGENOM" id="CLU_093757_2_0_6"/>
<dbReference type="Proteomes" id="UP000002704">
    <property type="component" value="Chromosome"/>
</dbReference>
<dbReference type="GO" id="GO:0005737">
    <property type="term" value="C:cytoplasm"/>
    <property type="evidence" value="ECO:0007669"/>
    <property type="project" value="UniProtKB-SubCell"/>
</dbReference>
<dbReference type="GO" id="GO:0016151">
    <property type="term" value="F:nickel cation binding"/>
    <property type="evidence" value="ECO:0007669"/>
    <property type="project" value="UniProtKB-UniRule"/>
</dbReference>
<dbReference type="GO" id="GO:0051082">
    <property type="term" value="F:unfolded protein binding"/>
    <property type="evidence" value="ECO:0007669"/>
    <property type="project" value="UniProtKB-UniRule"/>
</dbReference>
<dbReference type="GO" id="GO:0006457">
    <property type="term" value="P:protein folding"/>
    <property type="evidence" value="ECO:0007669"/>
    <property type="project" value="InterPro"/>
</dbReference>
<dbReference type="GO" id="GO:0065003">
    <property type="term" value="P:protein-containing complex assembly"/>
    <property type="evidence" value="ECO:0007669"/>
    <property type="project" value="InterPro"/>
</dbReference>
<dbReference type="GO" id="GO:0019627">
    <property type="term" value="P:urea metabolic process"/>
    <property type="evidence" value="ECO:0007669"/>
    <property type="project" value="InterPro"/>
</dbReference>
<dbReference type="CDD" id="cd00571">
    <property type="entry name" value="UreE"/>
    <property type="match status" value="1"/>
</dbReference>
<dbReference type="Gene3D" id="2.60.260.20">
    <property type="entry name" value="Urease metallochaperone UreE, N-terminal domain"/>
    <property type="match status" value="1"/>
</dbReference>
<dbReference type="Gene3D" id="3.30.70.790">
    <property type="entry name" value="UreE, C-terminal domain"/>
    <property type="match status" value="1"/>
</dbReference>
<dbReference type="HAMAP" id="MF_00822">
    <property type="entry name" value="UreE"/>
    <property type="match status" value="1"/>
</dbReference>
<dbReference type="InterPro" id="IPR012406">
    <property type="entry name" value="UreE"/>
</dbReference>
<dbReference type="InterPro" id="IPR007864">
    <property type="entry name" value="UreE_C_dom"/>
</dbReference>
<dbReference type="InterPro" id="IPR004029">
    <property type="entry name" value="UreE_N"/>
</dbReference>
<dbReference type="InterPro" id="IPR036118">
    <property type="entry name" value="UreE_N_sf"/>
</dbReference>
<dbReference type="NCBIfam" id="NF009751">
    <property type="entry name" value="PRK13261.1-1"/>
    <property type="match status" value="1"/>
</dbReference>
<dbReference type="NCBIfam" id="NF009753">
    <property type="entry name" value="PRK13261.1-5"/>
    <property type="match status" value="1"/>
</dbReference>
<dbReference type="Pfam" id="PF05194">
    <property type="entry name" value="UreE_C"/>
    <property type="match status" value="1"/>
</dbReference>
<dbReference type="Pfam" id="PF02814">
    <property type="entry name" value="UreE_N"/>
    <property type="match status" value="1"/>
</dbReference>
<dbReference type="PIRSF" id="PIRSF036402">
    <property type="entry name" value="Ureas_acces_UreE"/>
    <property type="match status" value="1"/>
</dbReference>
<dbReference type="SMART" id="SM00988">
    <property type="entry name" value="UreE_N"/>
    <property type="match status" value="1"/>
</dbReference>
<dbReference type="SUPFAM" id="SSF69737">
    <property type="entry name" value="Urease metallochaperone UreE, C-terminal domain"/>
    <property type="match status" value="1"/>
</dbReference>
<dbReference type="SUPFAM" id="SSF69287">
    <property type="entry name" value="Urease metallochaperone UreE, N-terminal domain"/>
    <property type="match status" value="1"/>
</dbReference>
<feature type="chain" id="PRO_1000062557" description="Urease accessory protein UreE">
    <location>
        <begin position="1"/>
        <end position="166"/>
    </location>
</feature>